<sequence>MKVSSHEMVPEHEIIPGDEIPFLLEKYGIKIQQFPKLLISDPLVIEVGAKVGDIVKITRKSQTAGETVYFRLVVSNSV</sequence>
<protein>
    <recommendedName>
        <fullName evidence="1">DNA-directed RNA polymerase subunit Rpo5</fullName>
        <ecNumber evidence="1">2.7.7.6</ecNumber>
    </recommendedName>
    <alternativeName>
        <fullName evidence="1">DNA-directed RNA polymerase subunit H</fullName>
    </alternativeName>
</protein>
<keyword id="KW-0963">Cytoplasm</keyword>
<keyword id="KW-0240">DNA-directed RNA polymerase</keyword>
<keyword id="KW-0548">Nucleotidyltransferase</keyword>
<keyword id="KW-0804">Transcription</keyword>
<keyword id="KW-0808">Transferase</keyword>
<comment type="function">
    <text evidence="1">DNA-dependent RNA polymerase (RNAP) catalyzes the transcription of DNA into RNA using the four ribonucleoside triphosphates as substrates.</text>
</comment>
<comment type="catalytic activity">
    <reaction evidence="1">
        <text>RNA(n) + a ribonucleoside 5'-triphosphate = RNA(n+1) + diphosphate</text>
        <dbReference type="Rhea" id="RHEA:21248"/>
        <dbReference type="Rhea" id="RHEA-COMP:14527"/>
        <dbReference type="Rhea" id="RHEA-COMP:17342"/>
        <dbReference type="ChEBI" id="CHEBI:33019"/>
        <dbReference type="ChEBI" id="CHEBI:61557"/>
        <dbReference type="ChEBI" id="CHEBI:140395"/>
        <dbReference type="EC" id="2.7.7.6"/>
    </reaction>
</comment>
<comment type="subunit">
    <text evidence="1">Part of the RNA polymerase complex.</text>
</comment>
<comment type="subcellular location">
    <subcellularLocation>
        <location evidence="1">Cytoplasm</location>
    </subcellularLocation>
</comment>
<comment type="similarity">
    <text evidence="1">Belongs to the archaeal Rpo5/eukaryotic RPB5 RNA polymerase subunit family.</text>
</comment>
<name>RPO5_METVS</name>
<proteinExistence type="inferred from homology"/>
<dbReference type="EC" id="2.7.7.6" evidence="1"/>
<dbReference type="EMBL" id="X59151">
    <property type="protein sequence ID" value="CAA41862.1"/>
    <property type="molecule type" value="Genomic_DNA"/>
</dbReference>
<dbReference type="EMBL" id="X73293">
    <property type="protein sequence ID" value="CAA51725.1"/>
    <property type="molecule type" value="Genomic_DNA"/>
</dbReference>
<dbReference type="EMBL" id="CP000742">
    <property type="protein sequence ID" value="ABR54576.1"/>
    <property type="molecule type" value="Genomic_DNA"/>
</dbReference>
<dbReference type="PIR" id="S23795">
    <property type="entry name" value="S23795"/>
</dbReference>
<dbReference type="RefSeq" id="WP_011972478.1">
    <property type="nucleotide sequence ID" value="NC_009634.1"/>
</dbReference>
<dbReference type="SMR" id="P41559"/>
<dbReference type="STRING" id="406327.Mevan_0670"/>
<dbReference type="GeneID" id="5325114"/>
<dbReference type="KEGG" id="mvn:Mevan_0670"/>
<dbReference type="eggNOG" id="arCOG04258">
    <property type="taxonomic scope" value="Archaea"/>
</dbReference>
<dbReference type="HOGENOM" id="CLU_058320_4_0_2"/>
<dbReference type="OrthoDB" id="30537at2157"/>
<dbReference type="Proteomes" id="UP000001107">
    <property type="component" value="Chromosome"/>
</dbReference>
<dbReference type="GO" id="GO:0005737">
    <property type="term" value="C:cytoplasm"/>
    <property type="evidence" value="ECO:0007669"/>
    <property type="project" value="UniProtKB-SubCell"/>
</dbReference>
<dbReference type="GO" id="GO:0000428">
    <property type="term" value="C:DNA-directed RNA polymerase complex"/>
    <property type="evidence" value="ECO:0007669"/>
    <property type="project" value="UniProtKB-KW"/>
</dbReference>
<dbReference type="GO" id="GO:0003677">
    <property type="term" value="F:DNA binding"/>
    <property type="evidence" value="ECO:0007669"/>
    <property type="project" value="InterPro"/>
</dbReference>
<dbReference type="GO" id="GO:0003899">
    <property type="term" value="F:DNA-directed RNA polymerase activity"/>
    <property type="evidence" value="ECO:0007669"/>
    <property type="project" value="UniProtKB-UniRule"/>
</dbReference>
<dbReference type="GO" id="GO:0006366">
    <property type="term" value="P:transcription by RNA polymerase II"/>
    <property type="evidence" value="ECO:0007669"/>
    <property type="project" value="TreeGrafter"/>
</dbReference>
<dbReference type="GO" id="GO:0006362">
    <property type="term" value="P:transcription elongation by RNA polymerase I"/>
    <property type="evidence" value="ECO:0007669"/>
    <property type="project" value="TreeGrafter"/>
</dbReference>
<dbReference type="GO" id="GO:0042797">
    <property type="term" value="P:tRNA transcription by RNA polymerase III"/>
    <property type="evidence" value="ECO:0007669"/>
    <property type="project" value="TreeGrafter"/>
</dbReference>
<dbReference type="Gene3D" id="3.90.940.20">
    <property type="entry name" value="RPB5-like RNA polymerase subunit"/>
    <property type="match status" value="1"/>
</dbReference>
<dbReference type="HAMAP" id="MF_00025">
    <property type="entry name" value="RNApol_Rpo5_RPB5"/>
    <property type="match status" value="1"/>
</dbReference>
<dbReference type="InterPro" id="IPR014381">
    <property type="entry name" value="Arch_Rpo5/euc_Rpb5"/>
</dbReference>
<dbReference type="InterPro" id="IPR000783">
    <property type="entry name" value="RNA_pol_subH/Rpb5_C"/>
</dbReference>
<dbReference type="InterPro" id="IPR020608">
    <property type="entry name" value="RNA_pol_subH/Rpb5_CS"/>
</dbReference>
<dbReference type="InterPro" id="IPR035913">
    <property type="entry name" value="RPB5-like_sf"/>
</dbReference>
<dbReference type="NCBIfam" id="NF007129">
    <property type="entry name" value="PRK09570.1"/>
    <property type="match status" value="1"/>
</dbReference>
<dbReference type="PANTHER" id="PTHR10535">
    <property type="entry name" value="DNA-DIRECTED RNA POLYMERASES I, II, AND III SUBUNIT RPABC1"/>
    <property type="match status" value="1"/>
</dbReference>
<dbReference type="PANTHER" id="PTHR10535:SF0">
    <property type="entry name" value="DNA-DIRECTED RNA POLYMERASES I, II, AND III SUBUNIT RPABC1"/>
    <property type="match status" value="1"/>
</dbReference>
<dbReference type="Pfam" id="PF01191">
    <property type="entry name" value="RNA_pol_Rpb5_C"/>
    <property type="match status" value="1"/>
</dbReference>
<dbReference type="SUPFAM" id="SSF55287">
    <property type="entry name" value="RPB5-like RNA polymerase subunit"/>
    <property type="match status" value="1"/>
</dbReference>
<dbReference type="PROSITE" id="PS01110">
    <property type="entry name" value="RNA_POL_H_23KD"/>
    <property type="match status" value="1"/>
</dbReference>
<organism>
    <name type="scientific">Methanococcus vannielii (strain ATCC 35089 / DSM 1224 / JCM 13029 / OCM 148 / SB)</name>
    <dbReference type="NCBI Taxonomy" id="406327"/>
    <lineage>
        <taxon>Archaea</taxon>
        <taxon>Methanobacteriati</taxon>
        <taxon>Methanobacteriota</taxon>
        <taxon>Methanomada group</taxon>
        <taxon>Methanococci</taxon>
        <taxon>Methanococcales</taxon>
        <taxon>Methanococcaceae</taxon>
        <taxon>Methanococcus</taxon>
    </lineage>
</organism>
<feature type="chain" id="PRO_0000146097" description="DNA-directed RNA polymerase subunit Rpo5">
    <location>
        <begin position="1"/>
        <end position="78"/>
    </location>
</feature>
<gene>
    <name evidence="1" type="primary">rpo5</name>
    <name evidence="1" type="synonym">rpoH</name>
    <name type="ordered locus">Mevan_0670</name>
</gene>
<reference key="1">
    <citation type="journal article" date="1992" name="Proc. Natl. Acad. Sci. U.S.A.">
        <title>Component H of the DNA-dependent RNA polymerases of Archaea is homologous to a subunit shared by the three eucaryal nuclear RNA polymerases.</title>
        <authorList>
            <person name="Klenk H.-P."/>
            <person name="Palm P."/>
            <person name="Lottspeich F."/>
            <person name="Zillig W."/>
        </authorList>
    </citation>
    <scope>NUCLEOTIDE SEQUENCE [GENOMIC DNA]</scope>
</reference>
<reference key="2">
    <citation type="submission" date="2007-06" db="EMBL/GenBank/DDBJ databases">
        <title>Complete sequence of Methanococcus vannielii SB.</title>
        <authorList>
            <consortium name="US DOE Joint Genome Institute"/>
            <person name="Copeland A."/>
            <person name="Lucas S."/>
            <person name="Lapidus A."/>
            <person name="Barry K."/>
            <person name="Glavina del Rio T."/>
            <person name="Dalin E."/>
            <person name="Tice H."/>
            <person name="Pitluck S."/>
            <person name="Chain P."/>
            <person name="Malfatti S."/>
            <person name="Shin M."/>
            <person name="Vergez L."/>
            <person name="Schmutz J."/>
            <person name="Larimer F."/>
            <person name="Land M."/>
            <person name="Hauser L."/>
            <person name="Kyrpides N."/>
            <person name="Anderson I."/>
            <person name="Sieprawska-Lupa M."/>
            <person name="Whitman W.B."/>
            <person name="Richardson P."/>
        </authorList>
    </citation>
    <scope>NUCLEOTIDE SEQUENCE [LARGE SCALE GENOMIC DNA]</scope>
    <source>
        <strain>ATCC 35089 / DSM 1224 / JCM 13029 / OCM 148 / SB</strain>
    </source>
</reference>
<evidence type="ECO:0000255" key="1">
    <source>
        <dbReference type="HAMAP-Rule" id="MF_00025"/>
    </source>
</evidence>
<accession>P41559</accession>
<accession>A6UQ04</accession>